<reference key="1">
    <citation type="submission" date="2005-11" db="EMBL/GenBank/DDBJ databases">
        <authorList>
            <consortium name="NIH - Xenopus Gene Collection (XGC) project"/>
        </authorList>
    </citation>
    <scope>NUCLEOTIDE SEQUENCE [LARGE SCALE MRNA]</scope>
    <source>
        <tissue>Oocyte</tissue>
        <tissue>Spleen</tissue>
    </source>
</reference>
<keyword id="KW-0156">Chromatin regulator</keyword>
<keyword id="KW-0158">Chromosome</keyword>
<keyword id="KW-0479">Metal-binding</keyword>
<keyword id="KW-0539">Nucleus</keyword>
<keyword id="KW-1185">Reference proteome</keyword>
<keyword id="KW-0677">Repeat</keyword>
<keyword id="KW-0804">Transcription</keyword>
<keyword id="KW-0805">Transcription regulation</keyword>
<keyword id="KW-0862">Zinc</keyword>
<keyword id="KW-0863">Zinc-finger</keyword>
<protein>
    <recommendedName>
        <fullName evidence="4">MBT domain-containing protein 1</fullName>
    </recommendedName>
</protein>
<organism>
    <name type="scientific">Xenopus laevis</name>
    <name type="common">African clawed frog</name>
    <dbReference type="NCBI Taxonomy" id="8355"/>
    <lineage>
        <taxon>Eukaryota</taxon>
        <taxon>Metazoa</taxon>
        <taxon>Chordata</taxon>
        <taxon>Craniata</taxon>
        <taxon>Vertebrata</taxon>
        <taxon>Euteleostomi</taxon>
        <taxon>Amphibia</taxon>
        <taxon>Batrachia</taxon>
        <taxon>Anura</taxon>
        <taxon>Pipoidea</taxon>
        <taxon>Pipidae</taxon>
        <taxon>Xenopodinae</taxon>
        <taxon>Xenopus</taxon>
        <taxon>Xenopus</taxon>
    </lineage>
</organism>
<dbReference type="EMBL" id="BC073284">
    <property type="protein sequence ID" value="AAH73284.1"/>
    <property type="molecule type" value="mRNA"/>
</dbReference>
<dbReference type="EMBL" id="BC108771">
    <property type="protein sequence ID" value="AAI08772.1"/>
    <property type="molecule type" value="mRNA"/>
</dbReference>
<dbReference type="RefSeq" id="NP_001085289.1">
    <property type="nucleotide sequence ID" value="NM_001091820.1"/>
</dbReference>
<dbReference type="SMR" id="Q32N90"/>
<dbReference type="BioGRID" id="101803">
    <property type="interactions" value="2"/>
</dbReference>
<dbReference type="IntAct" id="Q32N90">
    <property type="interactions" value="1"/>
</dbReference>
<dbReference type="DNASU" id="443638"/>
<dbReference type="GeneID" id="443638"/>
<dbReference type="KEGG" id="xla:443638"/>
<dbReference type="AGR" id="Xenbase:XB-GENE-949662"/>
<dbReference type="CTD" id="443638"/>
<dbReference type="Xenbase" id="XB-GENE-949662">
    <property type="gene designation" value="mbtd1.L"/>
</dbReference>
<dbReference type="OMA" id="CAENGMP"/>
<dbReference type="OrthoDB" id="5800688at2759"/>
<dbReference type="Proteomes" id="UP000186698">
    <property type="component" value="Chromosome 9_10L"/>
</dbReference>
<dbReference type="Bgee" id="443638">
    <property type="expression patterns" value="Expressed in egg cell and 19 other cell types or tissues"/>
</dbReference>
<dbReference type="GO" id="GO:0035267">
    <property type="term" value="C:NuA4 histone acetyltransferase complex"/>
    <property type="evidence" value="ECO:0000250"/>
    <property type="project" value="UniProtKB"/>
</dbReference>
<dbReference type="GO" id="GO:0005634">
    <property type="term" value="C:nucleus"/>
    <property type="evidence" value="ECO:0000318"/>
    <property type="project" value="GO_Central"/>
</dbReference>
<dbReference type="GO" id="GO:0003682">
    <property type="term" value="F:chromatin binding"/>
    <property type="evidence" value="ECO:0000318"/>
    <property type="project" value="GO_Central"/>
</dbReference>
<dbReference type="GO" id="GO:0140005">
    <property type="term" value="F:histone H4K20me2 reader activity"/>
    <property type="evidence" value="ECO:0000250"/>
    <property type="project" value="UniProtKB"/>
</dbReference>
<dbReference type="GO" id="GO:0035064">
    <property type="term" value="F:methylated histone binding"/>
    <property type="evidence" value="ECO:0000318"/>
    <property type="project" value="GO_Central"/>
</dbReference>
<dbReference type="GO" id="GO:0008270">
    <property type="term" value="F:zinc ion binding"/>
    <property type="evidence" value="ECO:0007669"/>
    <property type="project" value="UniProtKB-KW"/>
</dbReference>
<dbReference type="GO" id="GO:0000724">
    <property type="term" value="P:double-strand break repair via homologous recombination"/>
    <property type="evidence" value="ECO:0000250"/>
    <property type="project" value="UniProtKB"/>
</dbReference>
<dbReference type="GO" id="GO:0045892">
    <property type="term" value="P:negative regulation of DNA-templated transcription"/>
    <property type="evidence" value="ECO:0000318"/>
    <property type="project" value="GO_Central"/>
</dbReference>
<dbReference type="CDD" id="cd20120">
    <property type="entry name" value="MBT_MBTD1_rpt1"/>
    <property type="match status" value="1"/>
</dbReference>
<dbReference type="CDD" id="cd20123">
    <property type="entry name" value="MBT_MBTD1_rpt2"/>
    <property type="match status" value="1"/>
</dbReference>
<dbReference type="CDD" id="cd20126">
    <property type="entry name" value="MBT_MBTD1_rpt3"/>
    <property type="match status" value="1"/>
</dbReference>
<dbReference type="CDD" id="cd20129">
    <property type="entry name" value="MBT_MBTD1_rpt4"/>
    <property type="match status" value="1"/>
</dbReference>
<dbReference type="FunFam" id="2.30.30.140:FF:000010">
    <property type="entry name" value="MBT domain-containing protein 1 isoform X1"/>
    <property type="match status" value="1"/>
</dbReference>
<dbReference type="FunFam" id="2.30.30.140:FF:000015">
    <property type="entry name" value="MBT domain-containing protein 1 isoform X1"/>
    <property type="match status" value="1"/>
</dbReference>
<dbReference type="FunFam" id="2.30.30.140:FF:000032">
    <property type="entry name" value="MBT domain-containing protein 1 isoform X1"/>
    <property type="match status" value="1"/>
</dbReference>
<dbReference type="FunFam" id="3.30.60.160:FF:000001">
    <property type="entry name" value="MBT domain-containing protein 1 isoform X1"/>
    <property type="match status" value="1"/>
</dbReference>
<dbReference type="Gene3D" id="2.30.30.140">
    <property type="match status" value="4"/>
</dbReference>
<dbReference type="Gene3D" id="3.30.60.160">
    <property type="match status" value="1"/>
</dbReference>
<dbReference type="InterPro" id="IPR004092">
    <property type="entry name" value="Mbt"/>
</dbReference>
<dbReference type="InterPro" id="IPR050548">
    <property type="entry name" value="PcG_chromatin_remod_factors"/>
</dbReference>
<dbReference type="InterPro" id="IPR012313">
    <property type="entry name" value="Znf_FCS"/>
</dbReference>
<dbReference type="InterPro" id="IPR038603">
    <property type="entry name" value="Znf_FCS_sf"/>
</dbReference>
<dbReference type="PANTHER" id="PTHR12247:SF79">
    <property type="entry name" value="MBT DOMAIN-CONTAINING PROTEIN 1"/>
    <property type="match status" value="1"/>
</dbReference>
<dbReference type="PANTHER" id="PTHR12247">
    <property type="entry name" value="POLYCOMB GROUP PROTEIN"/>
    <property type="match status" value="1"/>
</dbReference>
<dbReference type="Pfam" id="PF02820">
    <property type="entry name" value="MBT"/>
    <property type="match status" value="4"/>
</dbReference>
<dbReference type="Pfam" id="PF21319">
    <property type="entry name" value="zf-FCS_1"/>
    <property type="match status" value="1"/>
</dbReference>
<dbReference type="SMART" id="SM00561">
    <property type="entry name" value="MBT"/>
    <property type="match status" value="4"/>
</dbReference>
<dbReference type="SUPFAM" id="SSF63748">
    <property type="entry name" value="Tudor/PWWP/MBT"/>
    <property type="match status" value="4"/>
</dbReference>
<dbReference type="PROSITE" id="PS51079">
    <property type="entry name" value="MBT"/>
    <property type="match status" value="4"/>
</dbReference>
<dbReference type="PROSITE" id="PS51024">
    <property type="entry name" value="ZF_FCS"/>
    <property type="match status" value="1"/>
</dbReference>
<comment type="function">
    <text evidence="1">Chromatin reader component of the NuA4 histone acetyltransferase complex, a multiprotein complex involved in transcriptional activation of select genes principally by acetylation of nucleosomal histones H4 and H2A. The NuA4 complex plays a direct role in repair of DNA double-strand breaks (DSBs) by promoting homologous recombination (HR). MBTD1 specifically recognizes and binds monomethylated and dimethylated 'Lys-20' on histone H4 (H4K20me1 and H4K20me2, respectively). In the NuA4 complex, MBTD1 promotes recruitment of the complex to H4K20me marks by competing with TP53BP1 for binding to H4K20me. Following recruitment to H4K20me at DNA breaks, the NuA4 complex catalyzes acetylation of 'Lys-15' on histone H2A (H2AK15), blocking the ubiquitination mark required for TP53BP1 localization at DNA breaks, thereby promoting homologous recombination (HR).</text>
</comment>
<comment type="subunit">
    <text evidence="1">Monomer. Component of the NuA4 histone acetyltransferase complex.</text>
</comment>
<comment type="subcellular location">
    <subcellularLocation>
        <location evidence="1">Nucleus</location>
    </subcellularLocation>
    <subcellularLocation>
        <location evidence="1">Chromosome</location>
    </subcellularLocation>
</comment>
<evidence type="ECO:0000250" key="1">
    <source>
        <dbReference type="UniProtKB" id="Q05BQ5"/>
    </source>
</evidence>
<evidence type="ECO:0000255" key="2">
    <source>
        <dbReference type="PROSITE-ProRule" id="PRU00367"/>
    </source>
</evidence>
<evidence type="ECO:0000256" key="3">
    <source>
        <dbReference type="SAM" id="MobiDB-lite"/>
    </source>
</evidence>
<evidence type="ECO:0000305" key="4"/>
<accession>Q32N90</accession>
<accession>Q6GP59</accession>
<sequence>MEKTKDPADRSSRSERKRRDSFGMFDGYDSCSEDTSSSSSSDESEEEVAPLPSSLPIIKNNGQVYTYPDGKSGMATCEMCGMVGVRDAFYSKTKRFCSVSCSRSYSSNSKKASILARLQGKPPTKKAKVLQKKPLVAKLAAYAQYKATLKNQSVNKAPVTVEGFSWGNYITSNNVIAAPVTCFRHAPMGNCWGDIAEGVRIEVPNTDSNLPTKVFWISGIVKLAGYNALLRYEGFENDSSLDFWCNICGPDIHPVGWCATSGKPLVPPQSIQHKYTNWKAFLVKRLTGAKTLPPDFSQKVSENMQYPFKPSMRVEVVDKTHLCRTRVAVVESVIGGRLRLVYEESEDKTDDFWCHMYSPLIHPIGWSRSIGHRFKRTDILKKQESNYDAPSHLFIKVKDVEQGSEWFKEGMKLEAIDPLNLSAICVATIRKVLAEGYLMIGIDGSEAADGSDWFCYHASSPSIFPVGFCEINKIELTPPRGYTKLPFKWFDYLRETGSIAAPVKLFNKDVPNHGFRVGMKLEAVDLMEPRLVCVATVTRIIHRLLRIHFDGWEDEYDQWVDCESPDLYPVGWCQLTGYQLQPPAPQSNKDGQSNVSKQKKKSKSQPYKGHKKNFRKPGNRP</sequence>
<proteinExistence type="evidence at transcript level"/>
<name>MBTD1_XENLA</name>
<gene>
    <name evidence="1" type="primary">mbtd1</name>
</gene>
<feature type="chain" id="PRO_0000313719" description="MBT domain-containing protein 1">
    <location>
        <begin position="1"/>
        <end position="621"/>
    </location>
</feature>
<feature type="repeat" description="MBT 1">
    <location>
        <begin position="164"/>
        <end position="268"/>
    </location>
</feature>
<feature type="repeat" description="MBT 2">
    <location>
        <begin position="276"/>
        <end position="373"/>
    </location>
</feature>
<feature type="repeat" description="MBT 3">
    <location>
        <begin position="374"/>
        <end position="479"/>
    </location>
</feature>
<feature type="repeat" description="MBT 4">
    <location>
        <begin position="487"/>
        <end position="583"/>
    </location>
</feature>
<feature type="zinc finger region" description="FCS-type" evidence="2">
    <location>
        <begin position="68"/>
        <end position="103"/>
    </location>
</feature>
<feature type="region of interest" description="Disordered" evidence="3">
    <location>
        <begin position="1"/>
        <end position="55"/>
    </location>
</feature>
<feature type="region of interest" description="Disordered" evidence="3">
    <location>
        <begin position="581"/>
        <end position="621"/>
    </location>
</feature>
<feature type="compositionally biased region" description="Basic and acidic residues" evidence="3">
    <location>
        <begin position="1"/>
        <end position="21"/>
    </location>
</feature>
<feature type="compositionally biased region" description="Low complexity" evidence="3">
    <location>
        <begin position="29"/>
        <end position="41"/>
    </location>
</feature>
<feature type="compositionally biased region" description="Basic residues" evidence="3">
    <location>
        <begin position="597"/>
        <end position="621"/>
    </location>
</feature>
<feature type="binding site" evidence="2">
    <location>
        <position position="77"/>
    </location>
    <ligand>
        <name>Zn(2+)</name>
        <dbReference type="ChEBI" id="CHEBI:29105"/>
    </ligand>
</feature>
<feature type="binding site" evidence="2">
    <location>
        <position position="80"/>
    </location>
    <ligand>
        <name>Zn(2+)</name>
        <dbReference type="ChEBI" id="CHEBI:29105"/>
    </ligand>
</feature>
<feature type="binding site" evidence="2">
    <location>
        <position position="97"/>
    </location>
    <ligand>
        <name>Zn(2+)</name>
        <dbReference type="ChEBI" id="CHEBI:29105"/>
    </ligand>
</feature>
<feature type="binding site" evidence="2">
    <location>
        <position position="101"/>
    </location>
    <ligand>
        <name>Zn(2+)</name>
        <dbReference type="ChEBI" id="CHEBI:29105"/>
    </ligand>
</feature>
<feature type="sequence conflict" description="In Ref. 1; AAH73284." evidence="4" ref="1">
    <original>S</original>
    <variation>K</variation>
    <location>
        <position position="602"/>
    </location>
</feature>